<proteinExistence type="inferred from homology"/>
<organism>
    <name type="scientific">Thermotoga sp. (strain RQ2)</name>
    <dbReference type="NCBI Taxonomy" id="126740"/>
    <lineage>
        <taxon>Bacteria</taxon>
        <taxon>Thermotogati</taxon>
        <taxon>Thermotogota</taxon>
        <taxon>Thermotogae</taxon>
        <taxon>Thermotogales</taxon>
        <taxon>Thermotogaceae</taxon>
        <taxon>Thermotoga</taxon>
    </lineage>
</organism>
<keyword id="KW-0687">Ribonucleoprotein</keyword>
<keyword id="KW-0689">Ribosomal protein</keyword>
<dbReference type="EMBL" id="CP000969">
    <property type="protein sequence ID" value="ACB09578.1"/>
    <property type="molecule type" value="Genomic_DNA"/>
</dbReference>
<dbReference type="RefSeq" id="WP_004081989.1">
    <property type="nucleotide sequence ID" value="NC_010483.1"/>
</dbReference>
<dbReference type="SMR" id="B1LB80"/>
<dbReference type="KEGG" id="trq:TRQ2_1234"/>
<dbReference type="HOGENOM" id="CLU_103507_2_2_0"/>
<dbReference type="Proteomes" id="UP000001687">
    <property type="component" value="Chromosome"/>
</dbReference>
<dbReference type="GO" id="GO:0022625">
    <property type="term" value="C:cytosolic large ribosomal subunit"/>
    <property type="evidence" value="ECO:0007669"/>
    <property type="project" value="TreeGrafter"/>
</dbReference>
<dbReference type="GO" id="GO:0003735">
    <property type="term" value="F:structural constituent of ribosome"/>
    <property type="evidence" value="ECO:0007669"/>
    <property type="project" value="InterPro"/>
</dbReference>
<dbReference type="GO" id="GO:0006412">
    <property type="term" value="P:translation"/>
    <property type="evidence" value="ECO:0007669"/>
    <property type="project" value="UniProtKB-UniRule"/>
</dbReference>
<dbReference type="FunFam" id="2.30.30.790:FF:000001">
    <property type="entry name" value="50S ribosomal protein L19"/>
    <property type="match status" value="1"/>
</dbReference>
<dbReference type="Gene3D" id="2.30.30.790">
    <property type="match status" value="1"/>
</dbReference>
<dbReference type="HAMAP" id="MF_00402">
    <property type="entry name" value="Ribosomal_bL19"/>
    <property type="match status" value="1"/>
</dbReference>
<dbReference type="InterPro" id="IPR001857">
    <property type="entry name" value="Ribosomal_bL19"/>
</dbReference>
<dbReference type="InterPro" id="IPR018257">
    <property type="entry name" value="Ribosomal_bL19_CS"/>
</dbReference>
<dbReference type="InterPro" id="IPR038657">
    <property type="entry name" value="Ribosomal_bL19_sf"/>
</dbReference>
<dbReference type="InterPro" id="IPR008991">
    <property type="entry name" value="Translation_prot_SH3-like_sf"/>
</dbReference>
<dbReference type="NCBIfam" id="TIGR01024">
    <property type="entry name" value="rplS_bact"/>
    <property type="match status" value="1"/>
</dbReference>
<dbReference type="PANTHER" id="PTHR15680:SF9">
    <property type="entry name" value="LARGE RIBOSOMAL SUBUNIT PROTEIN BL19M"/>
    <property type="match status" value="1"/>
</dbReference>
<dbReference type="PANTHER" id="PTHR15680">
    <property type="entry name" value="RIBOSOMAL PROTEIN L19"/>
    <property type="match status" value="1"/>
</dbReference>
<dbReference type="Pfam" id="PF01245">
    <property type="entry name" value="Ribosomal_L19"/>
    <property type="match status" value="1"/>
</dbReference>
<dbReference type="PIRSF" id="PIRSF002191">
    <property type="entry name" value="Ribosomal_L19"/>
    <property type="match status" value="1"/>
</dbReference>
<dbReference type="PRINTS" id="PR00061">
    <property type="entry name" value="RIBOSOMALL19"/>
</dbReference>
<dbReference type="SUPFAM" id="SSF50104">
    <property type="entry name" value="Translation proteins SH3-like domain"/>
    <property type="match status" value="1"/>
</dbReference>
<dbReference type="PROSITE" id="PS01015">
    <property type="entry name" value="RIBOSOMAL_L19"/>
    <property type="match status" value="1"/>
</dbReference>
<accession>B1LB80</accession>
<protein>
    <recommendedName>
        <fullName evidence="1">Large ribosomal subunit protein bL19</fullName>
    </recommendedName>
    <alternativeName>
        <fullName evidence="2">50S ribosomal protein L19</fullName>
    </alternativeName>
</protein>
<sequence length="115" mass="13442">MDHLVKIIEKKYEKKEIPDFRPGDTVRVHVKVIEGDRERTQVFEGIVIAKRGSGINKTFTVRRIGSHGVGVERIFPVHSPVVEKIEVVRKGKVRRAKLYYLRNVRGKIRIKERRD</sequence>
<name>RL19_THESQ</name>
<evidence type="ECO:0000255" key="1">
    <source>
        <dbReference type="HAMAP-Rule" id="MF_00402"/>
    </source>
</evidence>
<evidence type="ECO:0000305" key="2"/>
<gene>
    <name evidence="1" type="primary">rplS</name>
    <name type="ordered locus">TRQ2_1234</name>
</gene>
<feature type="chain" id="PRO_1000193912" description="Large ribosomal subunit protein bL19">
    <location>
        <begin position="1"/>
        <end position="115"/>
    </location>
</feature>
<reference key="1">
    <citation type="journal article" date="2011" name="J. Bacteriol.">
        <title>Genome sequence of Thermotoga sp. strain RQ2, a hyperthermophilic bacterium isolated from a geothermally heated region of the seafloor near Ribeira Quente, the Azores.</title>
        <authorList>
            <person name="Swithers K.S."/>
            <person name="DiPippo J.L."/>
            <person name="Bruce D.C."/>
            <person name="Detter C."/>
            <person name="Tapia R."/>
            <person name="Han S."/>
            <person name="Saunders E."/>
            <person name="Goodwin L.A."/>
            <person name="Han J."/>
            <person name="Woyke T."/>
            <person name="Pitluck S."/>
            <person name="Pennacchio L."/>
            <person name="Nolan M."/>
            <person name="Mikhailova N."/>
            <person name="Lykidis A."/>
            <person name="Land M.L."/>
            <person name="Brettin T."/>
            <person name="Stetter K.O."/>
            <person name="Nelson K.E."/>
            <person name="Gogarten J.P."/>
            <person name="Noll K.M."/>
        </authorList>
    </citation>
    <scope>NUCLEOTIDE SEQUENCE [LARGE SCALE GENOMIC DNA]</scope>
    <source>
        <strain>RQ2</strain>
    </source>
</reference>
<comment type="function">
    <text evidence="1">This protein is located at the 30S-50S ribosomal subunit interface and may play a role in the structure and function of the aminoacyl-tRNA binding site.</text>
</comment>
<comment type="similarity">
    <text evidence="1">Belongs to the bacterial ribosomal protein bL19 family.</text>
</comment>